<gene>
    <name evidence="1" type="primary">atpE</name>
    <name type="ordered locus">GSU0333</name>
</gene>
<sequence length="91" mass="9444">MEFFTMCMLAAGFGMAIGAFGTGIGQGLAVKNAVEGVSRNPGASGKILTTMMIGLAMIESLAIYVLVVCLIILFANPYKDVAIELAKAVVK</sequence>
<protein>
    <recommendedName>
        <fullName evidence="1">ATP synthase subunit c</fullName>
    </recommendedName>
    <alternativeName>
        <fullName evidence="1">ATP synthase F(0) sector subunit c</fullName>
    </alternativeName>
    <alternativeName>
        <fullName evidence="1">F-type ATPase subunit c</fullName>
        <shortName evidence="1">F-ATPase subunit c</shortName>
    </alternativeName>
    <alternativeName>
        <fullName evidence="1">Lipid-binding protein</fullName>
    </alternativeName>
</protein>
<accession>Q74GB3</accession>
<dbReference type="EMBL" id="AE017180">
    <property type="protein sequence ID" value="AAR33666.1"/>
    <property type="molecule type" value="Genomic_DNA"/>
</dbReference>
<dbReference type="RefSeq" id="NP_951393.1">
    <property type="nucleotide sequence ID" value="NC_002939.5"/>
</dbReference>
<dbReference type="RefSeq" id="WP_010941001.1">
    <property type="nucleotide sequence ID" value="NC_002939.5"/>
</dbReference>
<dbReference type="SMR" id="Q74GB3"/>
<dbReference type="STRING" id="243231.GSU0333"/>
<dbReference type="EnsemblBacteria" id="AAR33666">
    <property type="protein sequence ID" value="AAR33666"/>
    <property type="gene ID" value="GSU0333"/>
</dbReference>
<dbReference type="KEGG" id="gsu:GSU0333"/>
<dbReference type="PATRIC" id="fig|243231.5.peg.330"/>
<dbReference type="eggNOG" id="COG0636">
    <property type="taxonomic scope" value="Bacteria"/>
</dbReference>
<dbReference type="HOGENOM" id="CLU_148047_2_0_7"/>
<dbReference type="InParanoid" id="Q74GB3"/>
<dbReference type="OrthoDB" id="5296711at2"/>
<dbReference type="Proteomes" id="UP000000577">
    <property type="component" value="Chromosome"/>
</dbReference>
<dbReference type="GO" id="GO:0005886">
    <property type="term" value="C:plasma membrane"/>
    <property type="evidence" value="ECO:0007669"/>
    <property type="project" value="UniProtKB-SubCell"/>
</dbReference>
<dbReference type="GO" id="GO:0045259">
    <property type="term" value="C:proton-transporting ATP synthase complex"/>
    <property type="evidence" value="ECO:0007669"/>
    <property type="project" value="UniProtKB-KW"/>
</dbReference>
<dbReference type="GO" id="GO:0033177">
    <property type="term" value="C:proton-transporting two-sector ATPase complex, proton-transporting domain"/>
    <property type="evidence" value="ECO:0007669"/>
    <property type="project" value="InterPro"/>
</dbReference>
<dbReference type="GO" id="GO:0008289">
    <property type="term" value="F:lipid binding"/>
    <property type="evidence" value="ECO:0007669"/>
    <property type="project" value="UniProtKB-KW"/>
</dbReference>
<dbReference type="GO" id="GO:0046933">
    <property type="term" value="F:proton-transporting ATP synthase activity, rotational mechanism"/>
    <property type="evidence" value="ECO:0007669"/>
    <property type="project" value="UniProtKB-UniRule"/>
</dbReference>
<dbReference type="GO" id="GO:0015986">
    <property type="term" value="P:proton motive force-driven ATP synthesis"/>
    <property type="evidence" value="ECO:0000318"/>
    <property type="project" value="GO_Central"/>
</dbReference>
<dbReference type="CDD" id="cd18121">
    <property type="entry name" value="ATP-synt_Fo_c"/>
    <property type="match status" value="1"/>
</dbReference>
<dbReference type="FunFam" id="1.20.120.610:FF:000006">
    <property type="entry name" value="ATP synthase subunit c"/>
    <property type="match status" value="1"/>
</dbReference>
<dbReference type="FunFam" id="1.20.20.10:FF:000002">
    <property type="entry name" value="ATP synthase subunit c"/>
    <property type="match status" value="1"/>
</dbReference>
<dbReference type="Gene3D" id="1.20.120.610">
    <property type="entry name" value="lithium bound rotor ring of v- atpase"/>
    <property type="match status" value="1"/>
</dbReference>
<dbReference type="HAMAP" id="MF_01396">
    <property type="entry name" value="ATP_synth_c_bact"/>
    <property type="match status" value="1"/>
</dbReference>
<dbReference type="InterPro" id="IPR005953">
    <property type="entry name" value="ATP_synth_csu_bac/chlpt"/>
</dbReference>
<dbReference type="InterPro" id="IPR000454">
    <property type="entry name" value="ATP_synth_F0_csu"/>
</dbReference>
<dbReference type="InterPro" id="IPR020537">
    <property type="entry name" value="ATP_synth_F0_csu_DDCD_BS"/>
</dbReference>
<dbReference type="InterPro" id="IPR002379">
    <property type="entry name" value="ATPase_proteolipid_c-like_dom"/>
</dbReference>
<dbReference type="InterPro" id="IPR035921">
    <property type="entry name" value="F/V-ATP_Csub_sf"/>
</dbReference>
<dbReference type="NCBIfam" id="TIGR01260">
    <property type="entry name" value="ATP_synt_c"/>
    <property type="match status" value="1"/>
</dbReference>
<dbReference type="PANTHER" id="PTHR10031">
    <property type="entry name" value="ATP SYNTHASE LIPID-BINDING PROTEIN, MITOCHONDRIAL"/>
    <property type="match status" value="1"/>
</dbReference>
<dbReference type="PANTHER" id="PTHR10031:SF0">
    <property type="entry name" value="ATPASE PROTEIN 9"/>
    <property type="match status" value="1"/>
</dbReference>
<dbReference type="Pfam" id="PF00137">
    <property type="entry name" value="ATP-synt_C"/>
    <property type="match status" value="1"/>
</dbReference>
<dbReference type="PRINTS" id="PR00124">
    <property type="entry name" value="ATPASEC"/>
</dbReference>
<dbReference type="SUPFAM" id="SSF81333">
    <property type="entry name" value="F1F0 ATP synthase subunit C"/>
    <property type="match status" value="1"/>
</dbReference>
<dbReference type="PROSITE" id="PS00605">
    <property type="entry name" value="ATPASE_C"/>
    <property type="match status" value="1"/>
</dbReference>
<evidence type="ECO:0000255" key="1">
    <source>
        <dbReference type="HAMAP-Rule" id="MF_01396"/>
    </source>
</evidence>
<keyword id="KW-0066">ATP synthesis</keyword>
<keyword id="KW-0997">Cell inner membrane</keyword>
<keyword id="KW-1003">Cell membrane</keyword>
<keyword id="KW-0138">CF(0)</keyword>
<keyword id="KW-0375">Hydrogen ion transport</keyword>
<keyword id="KW-0406">Ion transport</keyword>
<keyword id="KW-0446">Lipid-binding</keyword>
<keyword id="KW-0472">Membrane</keyword>
<keyword id="KW-1185">Reference proteome</keyword>
<keyword id="KW-0812">Transmembrane</keyword>
<keyword id="KW-1133">Transmembrane helix</keyword>
<keyword id="KW-0813">Transport</keyword>
<proteinExistence type="inferred from homology"/>
<feature type="chain" id="PRO_0000365886" description="ATP synthase subunit c">
    <location>
        <begin position="1"/>
        <end position="91"/>
    </location>
</feature>
<feature type="transmembrane region" description="Helical" evidence="1">
    <location>
        <begin position="4"/>
        <end position="24"/>
    </location>
</feature>
<feature type="transmembrane region" description="Helical" evidence="1">
    <location>
        <begin position="53"/>
        <end position="73"/>
    </location>
</feature>
<feature type="site" description="Reversibly protonated during proton transport" evidence="1">
    <location>
        <position position="59"/>
    </location>
</feature>
<comment type="function">
    <text evidence="1">F(1)F(0) ATP synthase produces ATP from ADP in the presence of a proton or sodium gradient. F-type ATPases consist of two structural domains, F(1) containing the extramembraneous catalytic core and F(0) containing the membrane proton channel, linked together by a central stalk and a peripheral stalk. During catalysis, ATP synthesis in the catalytic domain of F(1) is coupled via a rotary mechanism of the central stalk subunits to proton translocation.</text>
</comment>
<comment type="function">
    <text evidence="1">Key component of the F(0) channel; it plays a direct role in translocation across the membrane. A homomeric c-ring of between 10-14 subunits forms the central stalk rotor element with the F(1) delta and epsilon subunits.</text>
</comment>
<comment type="subunit">
    <text evidence="1">F-type ATPases have 2 components, F(1) - the catalytic core - and F(0) - the membrane proton channel. F(1) has five subunits: alpha(3), beta(3), gamma(1), delta(1), epsilon(1). F(0) has three main subunits: a(1), b(2) and c(10-14). The alpha and beta chains form an alternating ring which encloses part of the gamma chain. F(1) is attached to F(0) by a central stalk formed by the gamma and epsilon chains, while a peripheral stalk is formed by the delta and b chains.</text>
</comment>
<comment type="subcellular location">
    <subcellularLocation>
        <location evidence="1">Cell inner membrane</location>
        <topology evidence="1">Multi-pass membrane protein</topology>
    </subcellularLocation>
</comment>
<comment type="similarity">
    <text evidence="1">Belongs to the ATPase C chain family.</text>
</comment>
<name>ATPL_GEOSL</name>
<reference key="1">
    <citation type="journal article" date="2003" name="Science">
        <title>Genome of Geobacter sulfurreducens: metal reduction in subsurface environments.</title>
        <authorList>
            <person name="Methe B.A."/>
            <person name="Nelson K.E."/>
            <person name="Eisen J.A."/>
            <person name="Paulsen I.T."/>
            <person name="Nelson W.C."/>
            <person name="Heidelberg J.F."/>
            <person name="Wu D."/>
            <person name="Wu M."/>
            <person name="Ward N.L."/>
            <person name="Beanan M.J."/>
            <person name="Dodson R.J."/>
            <person name="Madupu R."/>
            <person name="Brinkac L.M."/>
            <person name="Daugherty S.C."/>
            <person name="DeBoy R.T."/>
            <person name="Durkin A.S."/>
            <person name="Gwinn M.L."/>
            <person name="Kolonay J.F."/>
            <person name="Sullivan S.A."/>
            <person name="Haft D.H."/>
            <person name="Selengut J."/>
            <person name="Davidsen T.M."/>
            <person name="Zafar N."/>
            <person name="White O."/>
            <person name="Tran B."/>
            <person name="Romero C."/>
            <person name="Forberger H.A."/>
            <person name="Weidman J.F."/>
            <person name="Khouri H.M."/>
            <person name="Feldblyum T.V."/>
            <person name="Utterback T.R."/>
            <person name="Van Aken S.E."/>
            <person name="Lovley D.R."/>
            <person name="Fraser C.M."/>
        </authorList>
    </citation>
    <scope>NUCLEOTIDE SEQUENCE [LARGE SCALE GENOMIC DNA]</scope>
    <source>
        <strain>ATCC 51573 / DSM 12127 / PCA</strain>
    </source>
</reference>
<organism>
    <name type="scientific">Geobacter sulfurreducens (strain ATCC 51573 / DSM 12127 / PCA)</name>
    <dbReference type="NCBI Taxonomy" id="243231"/>
    <lineage>
        <taxon>Bacteria</taxon>
        <taxon>Pseudomonadati</taxon>
        <taxon>Thermodesulfobacteriota</taxon>
        <taxon>Desulfuromonadia</taxon>
        <taxon>Geobacterales</taxon>
        <taxon>Geobacteraceae</taxon>
        <taxon>Geobacter</taxon>
    </lineage>
</organism>